<name>RSBW_STAA3</name>
<organism>
    <name type="scientific">Staphylococcus aureus (strain USA300)</name>
    <dbReference type="NCBI Taxonomy" id="367830"/>
    <lineage>
        <taxon>Bacteria</taxon>
        <taxon>Bacillati</taxon>
        <taxon>Bacillota</taxon>
        <taxon>Bacilli</taxon>
        <taxon>Bacillales</taxon>
        <taxon>Staphylococcaceae</taxon>
        <taxon>Staphylococcus</taxon>
    </lineage>
</organism>
<sequence length="159" mass="17921">MQSKEDFIEMRVPASAEYVSLIRLTLSGVFSRAGATYDDIEDAKIAVSEAVTNAVKHAYKENNNVGIINIYFEILEDKIKIVISDKGDSFDYETTKSKIGPYDKDENIDFLREGGLGLFLIESLMDEVTVYKESGVTISMTKYIKKEQVRNNGERVEIS</sequence>
<protein>
    <recommendedName>
        <fullName evidence="1">Serine-protein kinase RsbW</fullName>
        <ecNumber evidence="1">2.7.11.1</ecNumber>
    </recommendedName>
    <alternativeName>
        <fullName evidence="1">Anti-sigma-B factor</fullName>
    </alternativeName>
    <alternativeName>
        <fullName evidence="1">Sigma-B negative effector RsbW</fullName>
    </alternativeName>
</protein>
<evidence type="ECO:0000255" key="1">
    <source>
        <dbReference type="HAMAP-Rule" id="MF_00638"/>
    </source>
</evidence>
<accession>Q2FF59</accession>
<reference key="1">
    <citation type="journal article" date="2006" name="Lancet">
        <title>Complete genome sequence of USA300, an epidemic clone of community-acquired meticillin-resistant Staphylococcus aureus.</title>
        <authorList>
            <person name="Diep B.A."/>
            <person name="Gill S.R."/>
            <person name="Chang R.F."/>
            <person name="Phan T.H."/>
            <person name="Chen J.H."/>
            <person name="Davidson M.G."/>
            <person name="Lin F."/>
            <person name="Lin J."/>
            <person name="Carleton H.A."/>
            <person name="Mongodin E.F."/>
            <person name="Sensabaugh G.F."/>
            <person name="Perdreau-Remington F."/>
        </authorList>
    </citation>
    <scope>NUCLEOTIDE SEQUENCE [LARGE SCALE GENOMIC DNA]</scope>
    <source>
        <strain>USA300</strain>
    </source>
</reference>
<feature type="chain" id="PRO_0000301410" description="Serine-protein kinase RsbW">
    <location>
        <begin position="1"/>
        <end position="159"/>
    </location>
</feature>
<gene>
    <name evidence="1" type="primary">rsbW</name>
    <name type="ordered locus">SAUSA300_2023</name>
</gene>
<comment type="function">
    <text evidence="1">Negative regulator of sigma-B activity. Phosphorylates and inactivates its specific antagonist protein, RsbV. Upon phosphorylation of RsbV, RsbW is released and binds to sigma-B, thereby blocking its ability to form an RNA polymerase holoenzyme (E-sigma-B).</text>
</comment>
<comment type="catalytic activity">
    <reaction evidence="1">
        <text>L-seryl-[protein] + ATP = O-phospho-L-seryl-[protein] + ADP + H(+)</text>
        <dbReference type="Rhea" id="RHEA:17989"/>
        <dbReference type="Rhea" id="RHEA-COMP:9863"/>
        <dbReference type="Rhea" id="RHEA-COMP:11604"/>
        <dbReference type="ChEBI" id="CHEBI:15378"/>
        <dbReference type="ChEBI" id="CHEBI:29999"/>
        <dbReference type="ChEBI" id="CHEBI:30616"/>
        <dbReference type="ChEBI" id="CHEBI:83421"/>
        <dbReference type="ChEBI" id="CHEBI:456216"/>
        <dbReference type="EC" id="2.7.11.1"/>
    </reaction>
</comment>
<comment type="catalytic activity">
    <reaction evidence="1">
        <text>L-threonyl-[protein] + ATP = O-phospho-L-threonyl-[protein] + ADP + H(+)</text>
        <dbReference type="Rhea" id="RHEA:46608"/>
        <dbReference type="Rhea" id="RHEA-COMP:11060"/>
        <dbReference type="Rhea" id="RHEA-COMP:11605"/>
        <dbReference type="ChEBI" id="CHEBI:15378"/>
        <dbReference type="ChEBI" id="CHEBI:30013"/>
        <dbReference type="ChEBI" id="CHEBI:30616"/>
        <dbReference type="ChEBI" id="CHEBI:61977"/>
        <dbReference type="ChEBI" id="CHEBI:456216"/>
        <dbReference type="EC" id="2.7.11.1"/>
    </reaction>
</comment>
<comment type="similarity">
    <text evidence="1">Belongs to the anti-sigma-factor family.</text>
</comment>
<dbReference type="EC" id="2.7.11.1" evidence="1"/>
<dbReference type="EMBL" id="CP000255">
    <property type="protein sequence ID" value="ABD22317.1"/>
    <property type="molecule type" value="Genomic_DNA"/>
</dbReference>
<dbReference type="RefSeq" id="WP_001190829.1">
    <property type="nucleotide sequence ID" value="NZ_CP027476.1"/>
</dbReference>
<dbReference type="SMR" id="Q2FF59"/>
<dbReference type="KEGG" id="saa:SAUSA300_2023"/>
<dbReference type="HOGENOM" id="CLU_090336_11_1_9"/>
<dbReference type="OMA" id="KPEYVGV"/>
<dbReference type="Proteomes" id="UP000001939">
    <property type="component" value="Chromosome"/>
</dbReference>
<dbReference type="GO" id="GO:0005524">
    <property type="term" value="F:ATP binding"/>
    <property type="evidence" value="ECO:0007669"/>
    <property type="project" value="UniProtKB-KW"/>
</dbReference>
<dbReference type="GO" id="GO:0106310">
    <property type="term" value="F:protein serine kinase activity"/>
    <property type="evidence" value="ECO:0007669"/>
    <property type="project" value="RHEA"/>
</dbReference>
<dbReference type="GO" id="GO:0004674">
    <property type="term" value="F:protein serine/threonine kinase activity"/>
    <property type="evidence" value="ECO:0007669"/>
    <property type="project" value="UniProtKB-KW"/>
</dbReference>
<dbReference type="GO" id="GO:0016989">
    <property type="term" value="F:sigma factor antagonist activity"/>
    <property type="evidence" value="ECO:0007669"/>
    <property type="project" value="InterPro"/>
</dbReference>
<dbReference type="CDD" id="cd16936">
    <property type="entry name" value="HATPase_RsbW-like"/>
    <property type="match status" value="1"/>
</dbReference>
<dbReference type="Gene3D" id="3.30.565.10">
    <property type="entry name" value="Histidine kinase-like ATPase, C-terminal domain"/>
    <property type="match status" value="1"/>
</dbReference>
<dbReference type="HAMAP" id="MF_00638">
    <property type="entry name" value="Anti_sigma_B"/>
    <property type="match status" value="1"/>
</dbReference>
<dbReference type="InterPro" id="IPR050267">
    <property type="entry name" value="Anti-sigma-factor_SerPK"/>
</dbReference>
<dbReference type="InterPro" id="IPR036890">
    <property type="entry name" value="HATPase_C_sf"/>
</dbReference>
<dbReference type="InterPro" id="IPR010193">
    <property type="entry name" value="RsbW"/>
</dbReference>
<dbReference type="NCBIfam" id="NF003144">
    <property type="entry name" value="PRK04069.1"/>
    <property type="match status" value="1"/>
</dbReference>
<dbReference type="NCBIfam" id="TIGR01924">
    <property type="entry name" value="rsbW_low_gc"/>
    <property type="match status" value="1"/>
</dbReference>
<dbReference type="PANTHER" id="PTHR35526">
    <property type="entry name" value="ANTI-SIGMA-F FACTOR RSBW-RELATED"/>
    <property type="match status" value="1"/>
</dbReference>
<dbReference type="PANTHER" id="PTHR35526:SF9">
    <property type="entry name" value="SERINE-PROTEIN KINASE RSBW"/>
    <property type="match status" value="1"/>
</dbReference>
<dbReference type="Pfam" id="PF13581">
    <property type="entry name" value="HATPase_c_2"/>
    <property type="match status" value="1"/>
</dbReference>
<dbReference type="SUPFAM" id="SSF55874">
    <property type="entry name" value="ATPase domain of HSP90 chaperone/DNA topoisomerase II/histidine kinase"/>
    <property type="match status" value="1"/>
</dbReference>
<keyword id="KW-0067">ATP-binding</keyword>
<keyword id="KW-0418">Kinase</keyword>
<keyword id="KW-0547">Nucleotide-binding</keyword>
<keyword id="KW-0723">Serine/threonine-protein kinase</keyword>
<keyword id="KW-0808">Transferase</keyword>
<proteinExistence type="inferred from homology"/>